<evidence type="ECO:0000255" key="1">
    <source>
        <dbReference type="HAMAP-Rule" id="MF_01571"/>
    </source>
</evidence>
<comment type="function">
    <text evidence="1">Catalyzes the attachment of proline to tRNA(Pro) in a two-step reaction: proline is first activated by ATP to form Pro-AMP and then transferred to the acceptor end of tRNA(Pro).</text>
</comment>
<comment type="catalytic activity">
    <reaction evidence="1">
        <text>tRNA(Pro) + L-proline + ATP = L-prolyl-tRNA(Pro) + AMP + diphosphate</text>
        <dbReference type="Rhea" id="RHEA:14305"/>
        <dbReference type="Rhea" id="RHEA-COMP:9700"/>
        <dbReference type="Rhea" id="RHEA-COMP:9702"/>
        <dbReference type="ChEBI" id="CHEBI:30616"/>
        <dbReference type="ChEBI" id="CHEBI:33019"/>
        <dbReference type="ChEBI" id="CHEBI:60039"/>
        <dbReference type="ChEBI" id="CHEBI:78442"/>
        <dbReference type="ChEBI" id="CHEBI:78532"/>
        <dbReference type="ChEBI" id="CHEBI:456215"/>
        <dbReference type="EC" id="6.1.1.15"/>
    </reaction>
</comment>
<comment type="subunit">
    <text evidence="1">Homodimer.</text>
</comment>
<comment type="subcellular location">
    <subcellularLocation>
        <location evidence="1">Cytoplasm</location>
    </subcellularLocation>
</comment>
<comment type="domain">
    <text evidence="1">Consists of three domains: the N-terminal catalytic domain, the anticodon-binding domain and the C-terminal extension.</text>
</comment>
<comment type="similarity">
    <text evidence="1">Belongs to the class-II aminoacyl-tRNA synthetase family. ProS type 3 subfamily.</text>
</comment>
<accession>Q1AX25</accession>
<dbReference type="EC" id="6.1.1.15" evidence="1"/>
<dbReference type="EMBL" id="CP000386">
    <property type="protein sequence ID" value="ABG04053.1"/>
    <property type="molecule type" value="Genomic_DNA"/>
</dbReference>
<dbReference type="RefSeq" id="WP_011564071.1">
    <property type="nucleotide sequence ID" value="NC_008148.1"/>
</dbReference>
<dbReference type="SMR" id="Q1AX25"/>
<dbReference type="STRING" id="266117.Rxyl_1087"/>
<dbReference type="KEGG" id="rxy:Rxyl_1087"/>
<dbReference type="eggNOG" id="COG0442">
    <property type="taxonomic scope" value="Bacteria"/>
</dbReference>
<dbReference type="HOGENOM" id="CLU_001882_4_2_11"/>
<dbReference type="OrthoDB" id="9809052at2"/>
<dbReference type="PhylomeDB" id="Q1AX25"/>
<dbReference type="Proteomes" id="UP000006637">
    <property type="component" value="Chromosome"/>
</dbReference>
<dbReference type="GO" id="GO:0017101">
    <property type="term" value="C:aminoacyl-tRNA synthetase multienzyme complex"/>
    <property type="evidence" value="ECO:0007669"/>
    <property type="project" value="TreeGrafter"/>
</dbReference>
<dbReference type="GO" id="GO:0005737">
    <property type="term" value="C:cytoplasm"/>
    <property type="evidence" value="ECO:0007669"/>
    <property type="project" value="UniProtKB-SubCell"/>
</dbReference>
<dbReference type="GO" id="GO:0005524">
    <property type="term" value="F:ATP binding"/>
    <property type="evidence" value="ECO:0007669"/>
    <property type="project" value="UniProtKB-UniRule"/>
</dbReference>
<dbReference type="GO" id="GO:0004827">
    <property type="term" value="F:proline-tRNA ligase activity"/>
    <property type="evidence" value="ECO:0007669"/>
    <property type="project" value="UniProtKB-UniRule"/>
</dbReference>
<dbReference type="GO" id="GO:0006433">
    <property type="term" value="P:prolyl-tRNA aminoacylation"/>
    <property type="evidence" value="ECO:0007669"/>
    <property type="project" value="UniProtKB-UniRule"/>
</dbReference>
<dbReference type="CDD" id="cd00862">
    <property type="entry name" value="ProRS_anticodon_zinc"/>
    <property type="match status" value="1"/>
</dbReference>
<dbReference type="CDD" id="cd00778">
    <property type="entry name" value="ProRS_core_arch_euk"/>
    <property type="match status" value="1"/>
</dbReference>
<dbReference type="FunFam" id="3.40.50.800:FF:000005">
    <property type="entry name" value="bifunctional glutamate/proline--tRNA ligase"/>
    <property type="match status" value="1"/>
</dbReference>
<dbReference type="FunFam" id="3.30.930.10:FF:000037">
    <property type="entry name" value="Proline--tRNA ligase"/>
    <property type="match status" value="1"/>
</dbReference>
<dbReference type="Gene3D" id="3.40.50.800">
    <property type="entry name" value="Anticodon-binding domain"/>
    <property type="match status" value="1"/>
</dbReference>
<dbReference type="Gene3D" id="3.30.930.10">
    <property type="entry name" value="Bira Bifunctional Protein, Domain 2"/>
    <property type="match status" value="1"/>
</dbReference>
<dbReference type="Gene3D" id="3.30.110.30">
    <property type="entry name" value="C-terminal domain of ProRS"/>
    <property type="match status" value="1"/>
</dbReference>
<dbReference type="HAMAP" id="MF_01571">
    <property type="entry name" value="Pro_tRNA_synth_type3"/>
    <property type="match status" value="1"/>
</dbReference>
<dbReference type="InterPro" id="IPR002314">
    <property type="entry name" value="aa-tRNA-synt_IIb"/>
</dbReference>
<dbReference type="InterPro" id="IPR006195">
    <property type="entry name" value="aa-tRNA-synth_II"/>
</dbReference>
<dbReference type="InterPro" id="IPR045864">
    <property type="entry name" value="aa-tRNA-synth_II/BPL/LPL"/>
</dbReference>
<dbReference type="InterPro" id="IPR004154">
    <property type="entry name" value="Anticodon-bd"/>
</dbReference>
<dbReference type="InterPro" id="IPR036621">
    <property type="entry name" value="Anticodon-bd_dom_sf"/>
</dbReference>
<dbReference type="InterPro" id="IPR002316">
    <property type="entry name" value="Pro-tRNA-ligase_IIa"/>
</dbReference>
<dbReference type="InterPro" id="IPR004499">
    <property type="entry name" value="Pro-tRNA-ligase_IIa_arc-type"/>
</dbReference>
<dbReference type="InterPro" id="IPR016061">
    <property type="entry name" value="Pro-tRNA_ligase_II_C"/>
</dbReference>
<dbReference type="InterPro" id="IPR017449">
    <property type="entry name" value="Pro-tRNA_synth_II"/>
</dbReference>
<dbReference type="InterPro" id="IPR033721">
    <property type="entry name" value="ProRS_core_arch_euk"/>
</dbReference>
<dbReference type="NCBIfam" id="TIGR00408">
    <property type="entry name" value="proS_fam_I"/>
    <property type="match status" value="1"/>
</dbReference>
<dbReference type="PANTHER" id="PTHR43382:SF2">
    <property type="entry name" value="BIFUNCTIONAL GLUTAMATE_PROLINE--TRNA LIGASE"/>
    <property type="match status" value="1"/>
</dbReference>
<dbReference type="PANTHER" id="PTHR43382">
    <property type="entry name" value="PROLYL-TRNA SYNTHETASE"/>
    <property type="match status" value="1"/>
</dbReference>
<dbReference type="Pfam" id="PF03129">
    <property type="entry name" value="HGTP_anticodon"/>
    <property type="match status" value="1"/>
</dbReference>
<dbReference type="Pfam" id="PF09180">
    <property type="entry name" value="ProRS-C_1"/>
    <property type="match status" value="1"/>
</dbReference>
<dbReference type="Pfam" id="PF00587">
    <property type="entry name" value="tRNA-synt_2b"/>
    <property type="match status" value="1"/>
</dbReference>
<dbReference type="PRINTS" id="PR01046">
    <property type="entry name" value="TRNASYNTHPRO"/>
</dbReference>
<dbReference type="SMART" id="SM00946">
    <property type="entry name" value="ProRS-C_1"/>
    <property type="match status" value="1"/>
</dbReference>
<dbReference type="SUPFAM" id="SSF64586">
    <property type="entry name" value="C-terminal domain of ProRS"/>
    <property type="match status" value="1"/>
</dbReference>
<dbReference type="SUPFAM" id="SSF52954">
    <property type="entry name" value="Class II aaRS ABD-related"/>
    <property type="match status" value="1"/>
</dbReference>
<dbReference type="SUPFAM" id="SSF55681">
    <property type="entry name" value="Class II aaRS and biotin synthetases"/>
    <property type="match status" value="1"/>
</dbReference>
<dbReference type="PROSITE" id="PS50862">
    <property type="entry name" value="AA_TRNA_LIGASE_II"/>
    <property type="match status" value="1"/>
</dbReference>
<proteinExistence type="inferred from homology"/>
<feature type="chain" id="PRO_0000288414" description="Proline--tRNA ligase">
    <location>
        <begin position="1"/>
        <end position="476"/>
    </location>
</feature>
<sequence length="476" mass="54544">MTEAVERLTKKSEDSSRWYLELVRMAKLADYGPVRGTFAIRPYGFAIWERIQADLDARFKATGHVNAYFPLLIPESYLTKEAEHVEGFAPECAWVTVGGDDELEERLAIRPTSESIICDFYRKWIHSYRDLPVLINQWCNVLRWEMVTRPFLRTAEFLWQEGHTVHATAEEAREEALRMLNVYRDCFYEVLAIPVLTGMKSPSERFAGAVETFTCEGLMGDGRALQAATSHDLGQNFARAFDITFLDENQERVHPYQTSWGFSTRTIGALILVHGDDRGLRLPPKLAPTQAVVVPIWRGKNKGEVRREAEALHRELAEAGLRAEADLDEEHSPGWKFNEHELRGVPVRVELGPKDIEKGQAVLVRRDTGEKEFVGRGAAARRLVELMDEIQQNMLRQAEAFRDENTRRAETYEEFKEIIEEKRGFVVAPWDGTEETEQRIKEETKATIRLLPFEREEGKDLVSGRPGKTAVFARAY</sequence>
<keyword id="KW-0030">Aminoacyl-tRNA synthetase</keyword>
<keyword id="KW-0067">ATP-binding</keyword>
<keyword id="KW-0963">Cytoplasm</keyword>
<keyword id="KW-0436">Ligase</keyword>
<keyword id="KW-0547">Nucleotide-binding</keyword>
<keyword id="KW-0648">Protein biosynthesis</keyword>
<keyword id="KW-1185">Reference proteome</keyword>
<organism>
    <name type="scientific">Rubrobacter xylanophilus (strain DSM 9941 / JCM 11954 / NBRC 16129 / PRD-1)</name>
    <dbReference type="NCBI Taxonomy" id="266117"/>
    <lineage>
        <taxon>Bacteria</taxon>
        <taxon>Bacillati</taxon>
        <taxon>Actinomycetota</taxon>
        <taxon>Rubrobacteria</taxon>
        <taxon>Rubrobacterales</taxon>
        <taxon>Rubrobacteraceae</taxon>
        <taxon>Rubrobacter</taxon>
    </lineage>
</organism>
<name>SYP_RUBXD</name>
<protein>
    <recommendedName>
        <fullName evidence="1">Proline--tRNA ligase</fullName>
        <ecNumber evidence="1">6.1.1.15</ecNumber>
    </recommendedName>
    <alternativeName>
        <fullName evidence="1">Prolyl-tRNA synthetase</fullName>
        <shortName evidence="1">ProRS</shortName>
    </alternativeName>
</protein>
<gene>
    <name evidence="1" type="primary">proS</name>
    <name type="ordered locus">Rxyl_1087</name>
</gene>
<reference key="1">
    <citation type="submission" date="2006-06" db="EMBL/GenBank/DDBJ databases">
        <title>Complete sequence of Rubrobacter xylanophilus DSM 9941.</title>
        <authorList>
            <consortium name="US DOE Joint Genome Institute"/>
            <person name="Copeland A."/>
            <person name="Lucas S."/>
            <person name="Lapidus A."/>
            <person name="Barry K."/>
            <person name="Detter J.C."/>
            <person name="Glavina del Rio T."/>
            <person name="Hammon N."/>
            <person name="Israni S."/>
            <person name="Dalin E."/>
            <person name="Tice H."/>
            <person name="Pitluck S."/>
            <person name="Munk A.C."/>
            <person name="Brettin T."/>
            <person name="Bruce D."/>
            <person name="Han C."/>
            <person name="Tapia R."/>
            <person name="Gilna P."/>
            <person name="Schmutz J."/>
            <person name="Larimer F."/>
            <person name="Land M."/>
            <person name="Hauser L."/>
            <person name="Kyrpides N."/>
            <person name="Lykidis A."/>
            <person name="da Costa M.S."/>
            <person name="Rainey F.A."/>
            <person name="Empadinhas N."/>
            <person name="Jolivet E."/>
            <person name="Battista J.R."/>
            <person name="Richardson P."/>
        </authorList>
    </citation>
    <scope>NUCLEOTIDE SEQUENCE [LARGE SCALE GENOMIC DNA]</scope>
    <source>
        <strain>DSM 9941 / JCM 11954 / NBRC 16129 / PRD-1</strain>
    </source>
</reference>